<keyword id="KW-0027">Amidation</keyword>
<keyword id="KW-0903">Direct protein sequencing</keyword>
<keyword id="KW-0527">Neuropeptide</keyword>
<keyword id="KW-0964">Secreted</keyword>
<sequence>GASGLIAFPRV</sequence>
<proteinExistence type="evidence at protein level"/>
<reference evidence="6" key="1">
    <citation type="journal article" date="2010" name="Peptides">
        <title>CAPA-peptides of praying mantids (Mantodea).</title>
        <authorList>
            <person name="Koehler R."/>
            <person name="Predel R."/>
        </authorList>
    </citation>
    <scope>PROTEIN SEQUENCE</scope>
    <scope>MASS SPECTROMETRY</scope>
    <scope>AMIDATION AT VAL-11</scope>
    <source>
        <tissue evidence="4">Abdominal perisympathetic organs</tissue>
    </source>
</reference>
<evidence type="ECO:0000250" key="1">
    <source>
        <dbReference type="UniProtKB" id="P83923"/>
    </source>
</evidence>
<evidence type="ECO:0000250" key="2">
    <source>
        <dbReference type="UniProtKB" id="P84375"/>
    </source>
</evidence>
<evidence type="ECO:0000255" key="3"/>
<evidence type="ECO:0000269" key="4">
    <source>
    </source>
</evidence>
<evidence type="ECO:0000303" key="5">
    <source>
    </source>
</evidence>
<evidence type="ECO:0000305" key="6"/>
<name>PVK2_HOPGR</name>
<feature type="peptide" id="PRO_0000395587" description="Periviscerokinin-2" evidence="4">
    <location>
        <begin position="1"/>
        <end position="11"/>
    </location>
</feature>
<feature type="modified residue" description="Valine amide" evidence="4">
    <location>
        <position position="11"/>
    </location>
</feature>
<feature type="unsure residue" description="L or I" evidence="4">
    <location>
        <position position="5"/>
    </location>
</feature>
<feature type="unsure residue" description="I or L" evidence="4">
    <location>
        <position position="6"/>
    </location>
</feature>
<comment type="function">
    <text evidence="1">Mediates visceral muscle contractile activity (myotropic activity).</text>
</comment>
<comment type="subcellular location">
    <subcellularLocation>
        <location evidence="2">Secreted</location>
    </subcellularLocation>
</comment>
<comment type="mass spectrometry"/>
<comment type="similarity">
    <text evidence="3">Belongs to the periviscerokinin family.</text>
</comment>
<protein>
    <recommendedName>
        <fullName evidence="5">Periviscerokinin-2</fullName>
    </recommendedName>
</protein>
<organism>
    <name type="scientific">Hoplocoryphella grandis</name>
    <name type="common">Stick mantid</name>
    <dbReference type="NCBI Taxonomy" id="765345"/>
    <lineage>
        <taxon>Eukaryota</taxon>
        <taxon>Metazoa</taxon>
        <taxon>Ecdysozoa</taxon>
        <taxon>Arthropoda</taxon>
        <taxon>Hexapoda</taxon>
        <taxon>Insecta</taxon>
        <taxon>Pterygota</taxon>
        <taxon>Neoptera</taxon>
        <taxon>Polyneoptera</taxon>
        <taxon>Dictyoptera</taxon>
        <taxon>Mantodea</taxon>
        <taxon>Eumantodea</taxon>
        <taxon>Thespoidea</taxon>
        <taxon>Thespidae</taxon>
        <taxon>Hoplocoryphinae</taxon>
        <taxon>Hoplocoryphella</taxon>
    </lineage>
</organism>
<accession>P86656</accession>
<dbReference type="GO" id="GO:0005576">
    <property type="term" value="C:extracellular region"/>
    <property type="evidence" value="ECO:0007669"/>
    <property type="project" value="UniProtKB-SubCell"/>
</dbReference>
<dbReference type="GO" id="GO:0007218">
    <property type="term" value="P:neuropeptide signaling pathway"/>
    <property type="evidence" value="ECO:0007669"/>
    <property type="project" value="UniProtKB-KW"/>
</dbReference>
<dbReference type="InterPro" id="IPR013231">
    <property type="entry name" value="Periviscerokinin"/>
</dbReference>
<dbReference type="Pfam" id="PF08259">
    <property type="entry name" value="Periviscerokin"/>
    <property type="match status" value="1"/>
</dbReference>